<protein>
    <recommendedName>
        <fullName>Uncharacterized protein C48B4.10</fullName>
    </recommendedName>
</protein>
<keyword id="KW-0472">Membrane</keyword>
<keyword id="KW-1185">Reference proteome</keyword>
<keyword id="KW-0812">Transmembrane</keyword>
<keyword id="KW-1133">Transmembrane helix</keyword>
<dbReference type="EMBL" id="Z29117">
    <property type="protein sequence ID" value="CAA82375.2"/>
    <property type="molecule type" value="Genomic_DNA"/>
</dbReference>
<dbReference type="PIR" id="S40721">
    <property type="entry name" value="S40721"/>
</dbReference>
<dbReference type="RefSeq" id="NP_001369841.1">
    <property type="nucleotide sequence ID" value="NM_001382966.2"/>
</dbReference>
<dbReference type="RefSeq" id="NP_499113.2">
    <property type="nucleotide sequence ID" value="NM_066712.2"/>
</dbReference>
<dbReference type="SMR" id="P34364"/>
<dbReference type="FunCoup" id="P34364">
    <property type="interactions" value="1524"/>
</dbReference>
<dbReference type="PaxDb" id="6239-C48B4.10"/>
<dbReference type="PeptideAtlas" id="P34364"/>
<dbReference type="EnsemblMetazoa" id="C48B4.10.1">
    <property type="protein sequence ID" value="C48B4.10.1"/>
    <property type="gene ID" value="WBGene00008173"/>
</dbReference>
<dbReference type="GeneID" id="183568"/>
<dbReference type="UCSC" id="C48B4.10">
    <property type="organism name" value="c. elegans"/>
</dbReference>
<dbReference type="AGR" id="WB:WBGene00008173"/>
<dbReference type="WormBase" id="C48B4.10">
    <property type="protein sequence ID" value="CE33604"/>
    <property type="gene ID" value="WBGene00008173"/>
</dbReference>
<dbReference type="eggNOG" id="ENOG502TI4F">
    <property type="taxonomic scope" value="Eukaryota"/>
</dbReference>
<dbReference type="HOGENOM" id="CLU_1448919_0_0_1"/>
<dbReference type="InParanoid" id="P34364"/>
<dbReference type="OMA" id="HYNRDAY"/>
<dbReference type="OrthoDB" id="5805950at2759"/>
<dbReference type="PhylomeDB" id="P34364"/>
<dbReference type="PRO" id="PR:P34364"/>
<dbReference type="Proteomes" id="UP000001940">
    <property type="component" value="Chromosome III"/>
</dbReference>
<dbReference type="Bgee" id="WBGene00008173">
    <property type="expression patterns" value="Expressed in germ line (C elegans) and 4 other cell types or tissues"/>
</dbReference>
<dbReference type="GO" id="GO:0016020">
    <property type="term" value="C:membrane"/>
    <property type="evidence" value="ECO:0007669"/>
    <property type="project" value="UniProtKB-SubCell"/>
</dbReference>
<dbReference type="InterPro" id="IPR035321">
    <property type="entry name" value="DUF5373"/>
</dbReference>
<dbReference type="Pfam" id="PF17343">
    <property type="entry name" value="DUF5373"/>
    <property type="match status" value="1"/>
</dbReference>
<reference key="1">
    <citation type="journal article" date="1994" name="Nature">
        <title>2.2 Mb of contiguous nucleotide sequence from chromosome III of C. elegans.</title>
        <authorList>
            <person name="Wilson R."/>
            <person name="Ainscough R."/>
            <person name="Anderson K."/>
            <person name="Baynes C."/>
            <person name="Berks M."/>
            <person name="Bonfield J."/>
            <person name="Burton J."/>
            <person name="Connell M."/>
            <person name="Copsey T."/>
            <person name="Cooper J."/>
            <person name="Coulson A."/>
            <person name="Craxton M."/>
            <person name="Dear S."/>
            <person name="Du Z."/>
            <person name="Durbin R."/>
            <person name="Favello A."/>
            <person name="Fraser A."/>
            <person name="Fulton L."/>
            <person name="Gardner A."/>
            <person name="Green P."/>
            <person name="Hawkins T."/>
            <person name="Hillier L."/>
            <person name="Jier M."/>
            <person name="Johnston L."/>
            <person name="Jones M."/>
            <person name="Kershaw J."/>
            <person name="Kirsten J."/>
            <person name="Laisster N."/>
            <person name="Latreille P."/>
            <person name="Lightning J."/>
            <person name="Lloyd C."/>
            <person name="Mortimore B."/>
            <person name="O'Callaghan M."/>
            <person name="Parsons J."/>
            <person name="Percy C."/>
            <person name="Rifken L."/>
            <person name="Roopra A."/>
            <person name="Saunders D."/>
            <person name="Shownkeen R."/>
            <person name="Sims M."/>
            <person name="Smaldon N."/>
            <person name="Smith A."/>
            <person name="Smith M."/>
            <person name="Sonnhammer E."/>
            <person name="Staden R."/>
            <person name="Sulston J."/>
            <person name="Thierry-Mieg J."/>
            <person name="Thomas K."/>
            <person name="Vaudin M."/>
            <person name="Vaughan K."/>
            <person name="Waterston R."/>
            <person name="Watson A."/>
            <person name="Weinstock L."/>
            <person name="Wilkinson-Sproat J."/>
            <person name="Wohldman P."/>
        </authorList>
    </citation>
    <scope>NUCLEOTIDE SEQUENCE [LARGE SCALE GENOMIC DNA]</scope>
    <source>
        <strain>Bristol N2</strain>
    </source>
</reference>
<reference key="2">
    <citation type="journal article" date="1998" name="Science">
        <title>Genome sequence of the nematode C. elegans: a platform for investigating biology.</title>
        <authorList>
            <consortium name="The C. elegans sequencing consortium"/>
        </authorList>
    </citation>
    <scope>NUCLEOTIDE SEQUENCE [LARGE SCALE GENOMIC DNA]</scope>
    <source>
        <strain>Bristol N2</strain>
    </source>
</reference>
<gene>
    <name type="ORF">C48B4.10</name>
</gene>
<sequence>MSKFYDPSQPEQSYDSPKLFGIIPIKFIVSFLQLVSIVSQILWLYSENDKIYLVLLSVGIVLNVFTVVVFIKEHKLLMRAHYYSALIFTVVPFIYAVYTFISFIELFFGDKDITFNQCSPFAYAFIFLCIYIFYLAMCRVLIKASEFQPDDMPDLDTTQGLFHYNRDAYDGGERAKLMYGEV</sequence>
<accession>P34364</accession>
<evidence type="ECO:0000255" key="1"/>
<evidence type="ECO:0000305" key="2"/>
<comment type="subcellular location">
    <subcellularLocation>
        <location evidence="2">Membrane</location>
        <topology evidence="2">Multi-pass membrane protein</topology>
    </subcellularLocation>
</comment>
<name>YLH0_CAEEL</name>
<feature type="chain" id="PRO_0000065251" description="Uncharacterized protein C48B4.10">
    <location>
        <begin position="1"/>
        <end position="182"/>
    </location>
</feature>
<feature type="transmembrane region" description="Helical" evidence="1">
    <location>
        <begin position="19"/>
        <end position="39"/>
    </location>
</feature>
<feature type="transmembrane region" description="Helical" evidence="1">
    <location>
        <begin position="51"/>
        <end position="71"/>
    </location>
</feature>
<feature type="transmembrane region" description="Helical" evidence="1">
    <location>
        <begin position="87"/>
        <end position="107"/>
    </location>
</feature>
<feature type="transmembrane region" description="Helical" evidence="1">
    <location>
        <begin position="118"/>
        <end position="138"/>
    </location>
</feature>
<proteinExistence type="predicted"/>
<organism>
    <name type="scientific">Caenorhabditis elegans</name>
    <dbReference type="NCBI Taxonomy" id="6239"/>
    <lineage>
        <taxon>Eukaryota</taxon>
        <taxon>Metazoa</taxon>
        <taxon>Ecdysozoa</taxon>
        <taxon>Nematoda</taxon>
        <taxon>Chromadorea</taxon>
        <taxon>Rhabditida</taxon>
        <taxon>Rhabditina</taxon>
        <taxon>Rhabditomorpha</taxon>
        <taxon>Rhabditoidea</taxon>
        <taxon>Rhabditidae</taxon>
        <taxon>Peloderinae</taxon>
        <taxon>Caenorhabditis</taxon>
    </lineage>
</organism>